<protein>
    <recommendedName>
        <fullName evidence="1">Formate-dependent phosphoribosylglycinamide formyltransferase</fullName>
        <ecNumber evidence="1">6.3.1.21</ecNumber>
    </recommendedName>
    <alternativeName>
        <fullName evidence="1">5'-phosphoribosylglycinamide transformylase 2</fullName>
    </alternativeName>
    <alternativeName>
        <fullName evidence="1">Formate-dependent GAR transformylase</fullName>
    </alternativeName>
    <alternativeName>
        <fullName evidence="1">GAR transformylase 2</fullName>
        <shortName evidence="1">GART 2</shortName>
    </alternativeName>
    <alternativeName>
        <fullName evidence="1">Non-folate glycinamide ribonucleotide transformylase</fullName>
    </alternativeName>
    <alternativeName>
        <fullName evidence="1">Phosphoribosylglycinamide formyltransferase 2</fullName>
    </alternativeName>
</protein>
<name>PURT_STRM5</name>
<gene>
    <name evidence="1" type="primary">purT</name>
    <name type="ordered locus">Smal_1107</name>
</gene>
<proteinExistence type="inferred from homology"/>
<evidence type="ECO:0000255" key="1">
    <source>
        <dbReference type="HAMAP-Rule" id="MF_01643"/>
    </source>
</evidence>
<reference key="1">
    <citation type="submission" date="2008-06" db="EMBL/GenBank/DDBJ databases">
        <title>Complete sequence of Stenotrophomonas maltophilia R551-3.</title>
        <authorList>
            <consortium name="US DOE Joint Genome Institute"/>
            <person name="Lucas S."/>
            <person name="Copeland A."/>
            <person name="Lapidus A."/>
            <person name="Glavina del Rio T."/>
            <person name="Dalin E."/>
            <person name="Tice H."/>
            <person name="Pitluck S."/>
            <person name="Chain P."/>
            <person name="Malfatti S."/>
            <person name="Shin M."/>
            <person name="Vergez L."/>
            <person name="Lang D."/>
            <person name="Schmutz J."/>
            <person name="Larimer F."/>
            <person name="Land M."/>
            <person name="Hauser L."/>
            <person name="Kyrpides N."/>
            <person name="Mikhailova N."/>
            <person name="Taghavi S."/>
            <person name="Monchy S."/>
            <person name="Newman L."/>
            <person name="Vangronsveld J."/>
            <person name="van der Lelie D."/>
            <person name="Richardson P."/>
        </authorList>
    </citation>
    <scope>NUCLEOTIDE SEQUENCE [LARGE SCALE GENOMIC DNA]</scope>
    <source>
        <strain>R551-3</strain>
    </source>
</reference>
<feature type="chain" id="PRO_1000186898" description="Formate-dependent phosphoribosylglycinamide formyltransferase">
    <location>
        <begin position="1"/>
        <end position="395"/>
    </location>
</feature>
<feature type="domain" description="ATP-grasp" evidence="1">
    <location>
        <begin position="120"/>
        <end position="309"/>
    </location>
</feature>
<feature type="binding site" evidence="1">
    <location>
        <begin position="22"/>
        <end position="23"/>
    </location>
    <ligand>
        <name>N(1)-(5-phospho-beta-D-ribosyl)glycinamide</name>
        <dbReference type="ChEBI" id="CHEBI:143788"/>
    </ligand>
</feature>
<feature type="binding site" evidence="1">
    <location>
        <position position="82"/>
    </location>
    <ligand>
        <name>N(1)-(5-phospho-beta-D-ribosyl)glycinamide</name>
        <dbReference type="ChEBI" id="CHEBI:143788"/>
    </ligand>
</feature>
<feature type="binding site" evidence="1">
    <location>
        <position position="115"/>
    </location>
    <ligand>
        <name>ATP</name>
        <dbReference type="ChEBI" id="CHEBI:30616"/>
    </ligand>
</feature>
<feature type="binding site" evidence="1">
    <location>
        <position position="156"/>
    </location>
    <ligand>
        <name>ATP</name>
        <dbReference type="ChEBI" id="CHEBI:30616"/>
    </ligand>
</feature>
<feature type="binding site" evidence="1">
    <location>
        <begin position="161"/>
        <end position="166"/>
    </location>
    <ligand>
        <name>ATP</name>
        <dbReference type="ChEBI" id="CHEBI:30616"/>
    </ligand>
</feature>
<feature type="binding site" evidence="1">
    <location>
        <begin position="196"/>
        <end position="199"/>
    </location>
    <ligand>
        <name>ATP</name>
        <dbReference type="ChEBI" id="CHEBI:30616"/>
    </ligand>
</feature>
<feature type="binding site" evidence="1">
    <location>
        <position position="204"/>
    </location>
    <ligand>
        <name>ATP</name>
        <dbReference type="ChEBI" id="CHEBI:30616"/>
    </ligand>
</feature>
<feature type="binding site" evidence="1">
    <location>
        <position position="268"/>
    </location>
    <ligand>
        <name>Mg(2+)</name>
        <dbReference type="ChEBI" id="CHEBI:18420"/>
    </ligand>
</feature>
<feature type="binding site" evidence="1">
    <location>
        <position position="280"/>
    </location>
    <ligand>
        <name>Mg(2+)</name>
        <dbReference type="ChEBI" id="CHEBI:18420"/>
    </ligand>
</feature>
<feature type="binding site" evidence="1">
    <location>
        <position position="287"/>
    </location>
    <ligand>
        <name>N(1)-(5-phospho-beta-D-ribosyl)glycinamide</name>
        <dbReference type="ChEBI" id="CHEBI:143788"/>
    </ligand>
</feature>
<feature type="binding site" evidence="1">
    <location>
        <position position="356"/>
    </location>
    <ligand>
        <name>N(1)-(5-phospho-beta-D-ribosyl)glycinamide</name>
        <dbReference type="ChEBI" id="CHEBI:143788"/>
    </ligand>
</feature>
<feature type="binding site" evidence="1">
    <location>
        <begin position="363"/>
        <end position="364"/>
    </location>
    <ligand>
        <name>N(1)-(5-phospho-beta-D-ribosyl)glycinamide</name>
        <dbReference type="ChEBI" id="CHEBI:143788"/>
    </ligand>
</feature>
<organism>
    <name type="scientific">Stenotrophomonas maltophilia (strain R551-3)</name>
    <dbReference type="NCBI Taxonomy" id="391008"/>
    <lineage>
        <taxon>Bacteria</taxon>
        <taxon>Pseudomonadati</taxon>
        <taxon>Pseudomonadota</taxon>
        <taxon>Gammaproteobacteria</taxon>
        <taxon>Lysobacterales</taxon>
        <taxon>Lysobacteraceae</taxon>
        <taxon>Stenotrophomonas</taxon>
        <taxon>Stenotrophomonas maltophilia group</taxon>
    </lineage>
</organism>
<dbReference type="EC" id="6.3.1.21" evidence="1"/>
<dbReference type="EMBL" id="CP001111">
    <property type="protein sequence ID" value="ACF50812.1"/>
    <property type="molecule type" value="Genomic_DNA"/>
</dbReference>
<dbReference type="RefSeq" id="WP_012510404.1">
    <property type="nucleotide sequence ID" value="NC_011071.1"/>
</dbReference>
<dbReference type="SMR" id="B4SP00"/>
<dbReference type="STRING" id="391008.Smal_1107"/>
<dbReference type="KEGG" id="smt:Smal_1107"/>
<dbReference type="eggNOG" id="COG0027">
    <property type="taxonomic scope" value="Bacteria"/>
</dbReference>
<dbReference type="HOGENOM" id="CLU_011534_1_3_6"/>
<dbReference type="OrthoDB" id="9804625at2"/>
<dbReference type="UniPathway" id="UPA00074">
    <property type="reaction ID" value="UER00127"/>
</dbReference>
<dbReference type="Proteomes" id="UP000001867">
    <property type="component" value="Chromosome"/>
</dbReference>
<dbReference type="GO" id="GO:0005829">
    <property type="term" value="C:cytosol"/>
    <property type="evidence" value="ECO:0007669"/>
    <property type="project" value="TreeGrafter"/>
</dbReference>
<dbReference type="GO" id="GO:0005524">
    <property type="term" value="F:ATP binding"/>
    <property type="evidence" value="ECO:0007669"/>
    <property type="project" value="UniProtKB-UniRule"/>
</dbReference>
<dbReference type="GO" id="GO:0000287">
    <property type="term" value="F:magnesium ion binding"/>
    <property type="evidence" value="ECO:0007669"/>
    <property type="project" value="InterPro"/>
</dbReference>
<dbReference type="GO" id="GO:0043815">
    <property type="term" value="F:phosphoribosylglycinamide formyltransferase 2 activity"/>
    <property type="evidence" value="ECO:0007669"/>
    <property type="project" value="UniProtKB-UniRule"/>
</dbReference>
<dbReference type="GO" id="GO:0004644">
    <property type="term" value="F:phosphoribosylglycinamide formyltransferase activity"/>
    <property type="evidence" value="ECO:0007669"/>
    <property type="project" value="InterPro"/>
</dbReference>
<dbReference type="GO" id="GO:0006189">
    <property type="term" value="P:'de novo' IMP biosynthetic process"/>
    <property type="evidence" value="ECO:0007669"/>
    <property type="project" value="UniProtKB-UniRule"/>
</dbReference>
<dbReference type="FunFam" id="3.30.1490.20:FF:000013">
    <property type="entry name" value="Formate-dependent phosphoribosylglycinamide formyltransferase"/>
    <property type="match status" value="1"/>
</dbReference>
<dbReference type="FunFam" id="3.30.470.20:FF:000027">
    <property type="entry name" value="Formate-dependent phosphoribosylglycinamide formyltransferase"/>
    <property type="match status" value="1"/>
</dbReference>
<dbReference type="FunFam" id="3.40.50.20:FF:000007">
    <property type="entry name" value="Formate-dependent phosphoribosylglycinamide formyltransferase"/>
    <property type="match status" value="1"/>
</dbReference>
<dbReference type="Gene3D" id="3.40.50.20">
    <property type="match status" value="1"/>
</dbReference>
<dbReference type="Gene3D" id="3.30.1490.20">
    <property type="entry name" value="ATP-grasp fold, A domain"/>
    <property type="match status" value="1"/>
</dbReference>
<dbReference type="Gene3D" id="3.30.470.20">
    <property type="entry name" value="ATP-grasp fold, B domain"/>
    <property type="match status" value="1"/>
</dbReference>
<dbReference type="HAMAP" id="MF_01643">
    <property type="entry name" value="PurT"/>
    <property type="match status" value="1"/>
</dbReference>
<dbReference type="InterPro" id="IPR011761">
    <property type="entry name" value="ATP-grasp"/>
</dbReference>
<dbReference type="InterPro" id="IPR003135">
    <property type="entry name" value="ATP-grasp_carboxylate-amine"/>
</dbReference>
<dbReference type="InterPro" id="IPR013815">
    <property type="entry name" value="ATP_grasp_subdomain_1"/>
</dbReference>
<dbReference type="InterPro" id="IPR016185">
    <property type="entry name" value="PreATP-grasp_dom_sf"/>
</dbReference>
<dbReference type="InterPro" id="IPR005862">
    <property type="entry name" value="PurT"/>
</dbReference>
<dbReference type="InterPro" id="IPR054350">
    <property type="entry name" value="PurT/PurK_preATP-grasp"/>
</dbReference>
<dbReference type="InterPro" id="IPR048740">
    <property type="entry name" value="PurT_C"/>
</dbReference>
<dbReference type="InterPro" id="IPR011054">
    <property type="entry name" value="Rudment_hybrid_motif"/>
</dbReference>
<dbReference type="NCBIfam" id="NF006766">
    <property type="entry name" value="PRK09288.1"/>
    <property type="match status" value="1"/>
</dbReference>
<dbReference type="NCBIfam" id="TIGR01142">
    <property type="entry name" value="purT"/>
    <property type="match status" value="1"/>
</dbReference>
<dbReference type="PANTHER" id="PTHR43055">
    <property type="entry name" value="FORMATE-DEPENDENT PHOSPHORIBOSYLGLYCINAMIDE FORMYLTRANSFERASE"/>
    <property type="match status" value="1"/>
</dbReference>
<dbReference type="PANTHER" id="PTHR43055:SF1">
    <property type="entry name" value="FORMATE-DEPENDENT PHOSPHORIBOSYLGLYCINAMIDE FORMYLTRANSFERASE"/>
    <property type="match status" value="1"/>
</dbReference>
<dbReference type="Pfam" id="PF02222">
    <property type="entry name" value="ATP-grasp"/>
    <property type="match status" value="1"/>
</dbReference>
<dbReference type="Pfam" id="PF21244">
    <property type="entry name" value="PurT_C"/>
    <property type="match status" value="1"/>
</dbReference>
<dbReference type="Pfam" id="PF22660">
    <property type="entry name" value="RS_preATP-grasp-like"/>
    <property type="match status" value="1"/>
</dbReference>
<dbReference type="SUPFAM" id="SSF56059">
    <property type="entry name" value="Glutathione synthetase ATP-binding domain-like"/>
    <property type="match status" value="1"/>
</dbReference>
<dbReference type="SUPFAM" id="SSF52440">
    <property type="entry name" value="PreATP-grasp domain"/>
    <property type="match status" value="1"/>
</dbReference>
<dbReference type="SUPFAM" id="SSF51246">
    <property type="entry name" value="Rudiment single hybrid motif"/>
    <property type="match status" value="1"/>
</dbReference>
<dbReference type="PROSITE" id="PS50975">
    <property type="entry name" value="ATP_GRASP"/>
    <property type="match status" value="1"/>
</dbReference>
<sequence length="395" mass="42333">MAKLGTPLSPSATRVLLLGSGELGKEVAIELQRLGVEVIAADRYADAPAMQVAHRSHVIDMLDAMALRALIAQEQPHLVVPEIEAIHTETLVQLEQEQGLRVIPTARAARLTMDREGIRRLAAETLGLPTSPYRFVDTEAEYRAAVAAIGLPCVVKPVMSSSGKGQSTLRSEADIAPAWEYAQTGGRAGAGRCIVEGFIDFDYEITLLTVRHAGGTSFCAPIGHLQKDGDYRESWQPQPMSSAALARAEEISRAITDDLGGWGLFGVELFVKGDEVWFSEVSPRPHDTGLVTLVSQELSEFALHARAILGLPIPVIRQSGPSASCALLAHGEGVPYFNNVAAALRVPDTAVRLFGKPSVHGHRRVGVTLARAETIDEARAIARDAADAIGVELRP</sequence>
<comment type="function">
    <text evidence="1">Involved in the de novo purine biosynthesis. Catalyzes the transfer of formate to 5-phospho-ribosyl-glycinamide (GAR), producing 5-phospho-ribosyl-N-formylglycinamide (FGAR). Formate is provided by PurU via hydrolysis of 10-formyl-tetrahydrofolate.</text>
</comment>
<comment type="catalytic activity">
    <reaction evidence="1">
        <text>N(1)-(5-phospho-beta-D-ribosyl)glycinamide + formate + ATP = N(2)-formyl-N(1)-(5-phospho-beta-D-ribosyl)glycinamide + ADP + phosphate + H(+)</text>
        <dbReference type="Rhea" id="RHEA:24829"/>
        <dbReference type="ChEBI" id="CHEBI:15378"/>
        <dbReference type="ChEBI" id="CHEBI:15740"/>
        <dbReference type="ChEBI" id="CHEBI:30616"/>
        <dbReference type="ChEBI" id="CHEBI:43474"/>
        <dbReference type="ChEBI" id="CHEBI:143788"/>
        <dbReference type="ChEBI" id="CHEBI:147286"/>
        <dbReference type="ChEBI" id="CHEBI:456216"/>
        <dbReference type="EC" id="6.3.1.21"/>
    </reaction>
    <physiologicalReaction direction="left-to-right" evidence="1">
        <dbReference type="Rhea" id="RHEA:24830"/>
    </physiologicalReaction>
</comment>
<comment type="pathway">
    <text evidence="1">Purine metabolism; IMP biosynthesis via de novo pathway; N(2)-formyl-N(1)-(5-phospho-D-ribosyl)glycinamide from N(1)-(5-phospho-D-ribosyl)glycinamide (formate route): step 1/1.</text>
</comment>
<comment type="subunit">
    <text evidence="1">Homodimer.</text>
</comment>
<comment type="similarity">
    <text evidence="1">Belongs to the PurK/PurT family.</text>
</comment>
<keyword id="KW-0067">ATP-binding</keyword>
<keyword id="KW-0436">Ligase</keyword>
<keyword id="KW-0460">Magnesium</keyword>
<keyword id="KW-0479">Metal-binding</keyword>
<keyword id="KW-0547">Nucleotide-binding</keyword>
<keyword id="KW-0658">Purine biosynthesis</keyword>
<accession>B4SP00</accession>